<organism>
    <name type="scientific">Agrobacterium fabrum (strain C58 / ATCC 33970)</name>
    <name type="common">Agrobacterium tumefaciens (strain C58)</name>
    <dbReference type="NCBI Taxonomy" id="176299"/>
    <lineage>
        <taxon>Bacteria</taxon>
        <taxon>Pseudomonadati</taxon>
        <taxon>Pseudomonadota</taxon>
        <taxon>Alphaproteobacteria</taxon>
        <taxon>Hyphomicrobiales</taxon>
        <taxon>Rhizobiaceae</taxon>
        <taxon>Rhizobium/Agrobacterium group</taxon>
        <taxon>Agrobacterium</taxon>
        <taxon>Agrobacterium tumefaciens complex</taxon>
    </lineage>
</organism>
<dbReference type="EC" id="2.6.99.2" evidence="1"/>
<dbReference type="EMBL" id="AE007869">
    <property type="protein sequence ID" value="AAK87778.2"/>
    <property type="molecule type" value="Genomic_DNA"/>
</dbReference>
<dbReference type="PIR" id="A97603">
    <property type="entry name" value="A97603"/>
</dbReference>
<dbReference type="PIR" id="AB2825">
    <property type="entry name" value="AB2825"/>
</dbReference>
<dbReference type="RefSeq" id="NP_354993.2">
    <property type="nucleotide sequence ID" value="NC_003062.2"/>
</dbReference>
<dbReference type="RefSeq" id="WP_010972007.1">
    <property type="nucleotide sequence ID" value="NC_003062.2"/>
</dbReference>
<dbReference type="SMR" id="Q8UDU5"/>
<dbReference type="STRING" id="176299.Atu2024"/>
<dbReference type="EnsemblBacteria" id="AAK87778">
    <property type="protein sequence ID" value="AAK87778"/>
    <property type="gene ID" value="Atu2024"/>
</dbReference>
<dbReference type="GeneID" id="1134062"/>
<dbReference type="KEGG" id="atu:Atu2024"/>
<dbReference type="PATRIC" id="fig|176299.10.peg.2033"/>
<dbReference type="eggNOG" id="COG0854">
    <property type="taxonomic scope" value="Bacteria"/>
</dbReference>
<dbReference type="HOGENOM" id="CLU_074563_1_0_5"/>
<dbReference type="OrthoDB" id="9806590at2"/>
<dbReference type="PhylomeDB" id="Q8UDU5"/>
<dbReference type="BioCyc" id="AGRO:ATU2024-MONOMER"/>
<dbReference type="UniPathway" id="UPA00244">
    <property type="reaction ID" value="UER00313"/>
</dbReference>
<dbReference type="Proteomes" id="UP000000813">
    <property type="component" value="Chromosome circular"/>
</dbReference>
<dbReference type="GO" id="GO:0005829">
    <property type="term" value="C:cytosol"/>
    <property type="evidence" value="ECO:0007669"/>
    <property type="project" value="TreeGrafter"/>
</dbReference>
<dbReference type="GO" id="GO:0033856">
    <property type="term" value="F:pyridoxine 5'-phosphate synthase activity"/>
    <property type="evidence" value="ECO:0007669"/>
    <property type="project" value="UniProtKB-EC"/>
</dbReference>
<dbReference type="GO" id="GO:0008615">
    <property type="term" value="P:pyridoxine biosynthetic process"/>
    <property type="evidence" value="ECO:0007669"/>
    <property type="project" value="UniProtKB-UniRule"/>
</dbReference>
<dbReference type="CDD" id="cd00003">
    <property type="entry name" value="PNPsynthase"/>
    <property type="match status" value="1"/>
</dbReference>
<dbReference type="Gene3D" id="3.20.20.70">
    <property type="entry name" value="Aldolase class I"/>
    <property type="match status" value="1"/>
</dbReference>
<dbReference type="HAMAP" id="MF_00279">
    <property type="entry name" value="PdxJ"/>
    <property type="match status" value="1"/>
</dbReference>
<dbReference type="InterPro" id="IPR013785">
    <property type="entry name" value="Aldolase_TIM"/>
</dbReference>
<dbReference type="InterPro" id="IPR004569">
    <property type="entry name" value="PyrdxlP_synth_PdxJ"/>
</dbReference>
<dbReference type="InterPro" id="IPR036130">
    <property type="entry name" value="Pyridoxine-5'_phos_synth"/>
</dbReference>
<dbReference type="NCBIfam" id="TIGR00559">
    <property type="entry name" value="pdxJ"/>
    <property type="match status" value="1"/>
</dbReference>
<dbReference type="NCBIfam" id="NF003626">
    <property type="entry name" value="PRK05265.1-4"/>
    <property type="match status" value="1"/>
</dbReference>
<dbReference type="PANTHER" id="PTHR30456">
    <property type="entry name" value="PYRIDOXINE 5'-PHOSPHATE SYNTHASE"/>
    <property type="match status" value="1"/>
</dbReference>
<dbReference type="PANTHER" id="PTHR30456:SF0">
    <property type="entry name" value="PYRIDOXINE 5'-PHOSPHATE SYNTHASE"/>
    <property type="match status" value="1"/>
</dbReference>
<dbReference type="Pfam" id="PF03740">
    <property type="entry name" value="PdxJ"/>
    <property type="match status" value="1"/>
</dbReference>
<dbReference type="SUPFAM" id="SSF63892">
    <property type="entry name" value="Pyridoxine 5'-phosphate synthase"/>
    <property type="match status" value="1"/>
</dbReference>
<evidence type="ECO:0000255" key="1">
    <source>
        <dbReference type="HAMAP-Rule" id="MF_00279"/>
    </source>
</evidence>
<keyword id="KW-0963">Cytoplasm</keyword>
<keyword id="KW-0664">Pyridoxine biosynthesis</keyword>
<keyword id="KW-1185">Reference proteome</keyword>
<keyword id="KW-0808">Transferase</keyword>
<proteinExistence type="inferred from homology"/>
<feature type="chain" id="PRO_0000190104" description="Pyridoxine 5'-phosphate synthase">
    <location>
        <begin position="1"/>
        <end position="251"/>
    </location>
</feature>
<feature type="active site" description="Proton acceptor" evidence="1">
    <location>
        <position position="44"/>
    </location>
</feature>
<feature type="active site" description="Proton acceptor" evidence="1">
    <location>
        <position position="76"/>
    </location>
</feature>
<feature type="active site" description="Proton donor" evidence="1">
    <location>
        <position position="200"/>
    </location>
</feature>
<feature type="binding site" evidence="1">
    <location>
        <position position="8"/>
    </location>
    <ligand>
        <name>3-amino-2-oxopropyl phosphate</name>
        <dbReference type="ChEBI" id="CHEBI:57279"/>
    </ligand>
</feature>
<feature type="binding site" evidence="1">
    <location>
        <position position="19"/>
    </location>
    <ligand>
        <name>3-amino-2-oxopropyl phosphate</name>
        <dbReference type="ChEBI" id="CHEBI:57279"/>
    </ligand>
</feature>
<feature type="binding site" evidence="1">
    <location>
        <position position="46"/>
    </location>
    <ligand>
        <name>1-deoxy-D-xylulose 5-phosphate</name>
        <dbReference type="ChEBI" id="CHEBI:57792"/>
    </ligand>
</feature>
<feature type="binding site" evidence="1">
    <location>
        <position position="51"/>
    </location>
    <ligand>
        <name>1-deoxy-D-xylulose 5-phosphate</name>
        <dbReference type="ChEBI" id="CHEBI:57792"/>
    </ligand>
</feature>
<feature type="binding site" evidence="1">
    <location>
        <position position="106"/>
    </location>
    <ligand>
        <name>1-deoxy-D-xylulose 5-phosphate</name>
        <dbReference type="ChEBI" id="CHEBI:57792"/>
    </ligand>
</feature>
<feature type="binding site" evidence="1">
    <location>
        <position position="201"/>
    </location>
    <ligand>
        <name>3-amino-2-oxopropyl phosphate</name>
        <dbReference type="ChEBI" id="CHEBI:57279"/>
    </ligand>
</feature>
<feature type="binding site" evidence="1">
    <location>
        <begin position="223"/>
        <end position="224"/>
    </location>
    <ligand>
        <name>3-amino-2-oxopropyl phosphate</name>
        <dbReference type="ChEBI" id="CHEBI:57279"/>
    </ligand>
</feature>
<feature type="site" description="Transition state stabilizer" evidence="1">
    <location>
        <position position="159"/>
    </location>
</feature>
<sequence length="251" mass="27283">MPAKLSVNLNAIAMLRNRRDLPWPDVAHFGQIALSAGASGLTVHPRPDQRHIRFSDLPVLRALIDDRFPGAEFNIEGYPTEDFLVLCEKTQPEQVTLVPDDPSQATSDHGWDFRKHAVFLKDVVGRLKAGGMRVSLFADGDGEREPVELAAETGAARIELYTGPYGGCFDDTQKADLLVEKLGQTADHAAALGLAVNAGHDLTVANLPKLMKRIPNLAEVSIGHGLTADAMEYGMAETVRRFCQACGQRNS</sequence>
<reference key="1">
    <citation type="journal article" date="2001" name="Science">
        <title>The genome of the natural genetic engineer Agrobacterium tumefaciens C58.</title>
        <authorList>
            <person name="Wood D.W."/>
            <person name="Setubal J.C."/>
            <person name="Kaul R."/>
            <person name="Monks D.E."/>
            <person name="Kitajima J.P."/>
            <person name="Okura V.K."/>
            <person name="Zhou Y."/>
            <person name="Chen L."/>
            <person name="Wood G.E."/>
            <person name="Almeida N.F. Jr."/>
            <person name="Woo L."/>
            <person name="Chen Y."/>
            <person name="Paulsen I.T."/>
            <person name="Eisen J.A."/>
            <person name="Karp P.D."/>
            <person name="Bovee D. Sr."/>
            <person name="Chapman P."/>
            <person name="Clendenning J."/>
            <person name="Deatherage G."/>
            <person name="Gillet W."/>
            <person name="Grant C."/>
            <person name="Kutyavin T."/>
            <person name="Levy R."/>
            <person name="Li M.-J."/>
            <person name="McClelland E."/>
            <person name="Palmieri A."/>
            <person name="Raymond C."/>
            <person name="Rouse G."/>
            <person name="Saenphimmachak C."/>
            <person name="Wu Z."/>
            <person name="Romero P."/>
            <person name="Gordon D."/>
            <person name="Zhang S."/>
            <person name="Yoo H."/>
            <person name="Tao Y."/>
            <person name="Biddle P."/>
            <person name="Jung M."/>
            <person name="Krespan W."/>
            <person name="Perry M."/>
            <person name="Gordon-Kamm B."/>
            <person name="Liao L."/>
            <person name="Kim S."/>
            <person name="Hendrick C."/>
            <person name="Zhao Z.-Y."/>
            <person name="Dolan M."/>
            <person name="Chumley F."/>
            <person name="Tingey S.V."/>
            <person name="Tomb J.-F."/>
            <person name="Gordon M.P."/>
            <person name="Olson M.V."/>
            <person name="Nester E.W."/>
        </authorList>
    </citation>
    <scope>NUCLEOTIDE SEQUENCE [LARGE SCALE GENOMIC DNA]</scope>
    <source>
        <strain>C58 / ATCC 33970</strain>
    </source>
</reference>
<reference key="2">
    <citation type="journal article" date="2001" name="Science">
        <title>Genome sequence of the plant pathogen and biotechnology agent Agrobacterium tumefaciens C58.</title>
        <authorList>
            <person name="Goodner B."/>
            <person name="Hinkle G."/>
            <person name="Gattung S."/>
            <person name="Miller N."/>
            <person name="Blanchard M."/>
            <person name="Qurollo B."/>
            <person name="Goldman B.S."/>
            <person name="Cao Y."/>
            <person name="Askenazi M."/>
            <person name="Halling C."/>
            <person name="Mullin L."/>
            <person name="Houmiel K."/>
            <person name="Gordon J."/>
            <person name="Vaudin M."/>
            <person name="Iartchouk O."/>
            <person name="Epp A."/>
            <person name="Liu F."/>
            <person name="Wollam C."/>
            <person name="Allinger M."/>
            <person name="Doughty D."/>
            <person name="Scott C."/>
            <person name="Lappas C."/>
            <person name="Markelz B."/>
            <person name="Flanagan C."/>
            <person name="Crowell C."/>
            <person name="Gurson J."/>
            <person name="Lomo C."/>
            <person name="Sear C."/>
            <person name="Strub G."/>
            <person name="Cielo C."/>
            <person name="Slater S."/>
        </authorList>
    </citation>
    <scope>NUCLEOTIDE SEQUENCE [LARGE SCALE GENOMIC DNA]</scope>
    <source>
        <strain>C58 / ATCC 33970</strain>
    </source>
</reference>
<gene>
    <name evidence="1" type="primary">pdxJ</name>
    <name type="ordered locus">Atu2024</name>
    <name type="ORF">AGR_C_3668</name>
</gene>
<protein>
    <recommendedName>
        <fullName evidence="1">Pyridoxine 5'-phosphate synthase</fullName>
        <shortName evidence="1">PNP synthase</shortName>
        <ecNumber evidence="1">2.6.99.2</ecNumber>
    </recommendedName>
</protein>
<name>PDXJ_AGRFC</name>
<comment type="function">
    <text evidence="1">Catalyzes the complicated ring closure reaction between the two acyclic compounds 1-deoxy-D-xylulose-5-phosphate (DXP) and 3-amino-2-oxopropyl phosphate (1-amino-acetone-3-phosphate or AAP) to form pyridoxine 5'-phosphate (PNP) and inorganic phosphate.</text>
</comment>
<comment type="catalytic activity">
    <reaction evidence="1">
        <text>3-amino-2-oxopropyl phosphate + 1-deoxy-D-xylulose 5-phosphate = pyridoxine 5'-phosphate + phosphate + 2 H2O + H(+)</text>
        <dbReference type="Rhea" id="RHEA:15265"/>
        <dbReference type="ChEBI" id="CHEBI:15377"/>
        <dbReference type="ChEBI" id="CHEBI:15378"/>
        <dbReference type="ChEBI" id="CHEBI:43474"/>
        <dbReference type="ChEBI" id="CHEBI:57279"/>
        <dbReference type="ChEBI" id="CHEBI:57792"/>
        <dbReference type="ChEBI" id="CHEBI:58589"/>
        <dbReference type="EC" id="2.6.99.2"/>
    </reaction>
</comment>
<comment type="pathway">
    <text evidence="1">Cofactor biosynthesis; pyridoxine 5'-phosphate biosynthesis; pyridoxine 5'-phosphate from D-erythrose 4-phosphate: step 5/5.</text>
</comment>
<comment type="subunit">
    <text evidence="1">Homooctamer; tetramer of dimers.</text>
</comment>
<comment type="subcellular location">
    <subcellularLocation>
        <location evidence="1">Cytoplasm</location>
    </subcellularLocation>
</comment>
<comment type="similarity">
    <text evidence="1">Belongs to the PNP synthase family.</text>
</comment>
<accession>Q8UDU5</accession>